<gene>
    <name evidence="1" type="primary">argB</name>
    <name type="ordered locus">Bcav_2371</name>
</gene>
<sequence>MSAPGADFDTERDLRAAQKAEVLVQALPWLERFAGAVVVIKFGGNAMIDADLEAAFADDVLFLRRVGLKPVVVHGGGPQITQMLAKLEITSEFRGGLRVTTPEAMDVVRMVLTGQVQRRLVTMLNARGPLAVGLSGEDAGLFRAQRRSAVVDGEPVDVGLVGDVSRVDPLAVADLLDAGRIPVVSTIATDEADPTQILNVNADTAASALAVALGATKLVVLTDVEGLYSAWPDRSSLVSLISAAELEAMLPGLDAGMVPKMEACLRAVRGGVPQAHVIDGRAPHALLLEVFTTEGVGTMVLPDEAAAGASSE</sequence>
<dbReference type="EC" id="2.7.2.8" evidence="1"/>
<dbReference type="EMBL" id="CP001618">
    <property type="protein sequence ID" value="ACQ80621.1"/>
    <property type="molecule type" value="Genomic_DNA"/>
</dbReference>
<dbReference type="RefSeq" id="WP_015882861.1">
    <property type="nucleotide sequence ID" value="NC_012669.1"/>
</dbReference>
<dbReference type="SMR" id="C5BW20"/>
<dbReference type="STRING" id="471853.Bcav_2371"/>
<dbReference type="KEGG" id="bcv:Bcav_2371"/>
<dbReference type="eggNOG" id="COG0548">
    <property type="taxonomic scope" value="Bacteria"/>
</dbReference>
<dbReference type="HOGENOM" id="CLU_053680_0_1_11"/>
<dbReference type="OrthoDB" id="9803155at2"/>
<dbReference type="UniPathway" id="UPA00068">
    <property type="reaction ID" value="UER00107"/>
</dbReference>
<dbReference type="Proteomes" id="UP000007962">
    <property type="component" value="Chromosome"/>
</dbReference>
<dbReference type="GO" id="GO:0005737">
    <property type="term" value="C:cytoplasm"/>
    <property type="evidence" value="ECO:0007669"/>
    <property type="project" value="UniProtKB-SubCell"/>
</dbReference>
<dbReference type="GO" id="GO:0003991">
    <property type="term" value="F:acetylglutamate kinase activity"/>
    <property type="evidence" value="ECO:0007669"/>
    <property type="project" value="UniProtKB-UniRule"/>
</dbReference>
<dbReference type="GO" id="GO:0005524">
    <property type="term" value="F:ATP binding"/>
    <property type="evidence" value="ECO:0007669"/>
    <property type="project" value="UniProtKB-UniRule"/>
</dbReference>
<dbReference type="GO" id="GO:0042450">
    <property type="term" value="P:arginine biosynthetic process via ornithine"/>
    <property type="evidence" value="ECO:0007669"/>
    <property type="project" value="UniProtKB-UniRule"/>
</dbReference>
<dbReference type="GO" id="GO:0006526">
    <property type="term" value="P:L-arginine biosynthetic process"/>
    <property type="evidence" value="ECO:0007669"/>
    <property type="project" value="UniProtKB-UniPathway"/>
</dbReference>
<dbReference type="CDD" id="cd04250">
    <property type="entry name" value="AAK_NAGK-C"/>
    <property type="match status" value="1"/>
</dbReference>
<dbReference type="FunFam" id="3.40.1160.10:FF:000004">
    <property type="entry name" value="Acetylglutamate kinase"/>
    <property type="match status" value="1"/>
</dbReference>
<dbReference type="Gene3D" id="3.40.1160.10">
    <property type="entry name" value="Acetylglutamate kinase-like"/>
    <property type="match status" value="1"/>
</dbReference>
<dbReference type="HAMAP" id="MF_00082">
    <property type="entry name" value="ArgB"/>
    <property type="match status" value="1"/>
</dbReference>
<dbReference type="InterPro" id="IPR036393">
    <property type="entry name" value="AceGlu_kinase-like_sf"/>
</dbReference>
<dbReference type="InterPro" id="IPR004662">
    <property type="entry name" value="AcgluKinase_fam"/>
</dbReference>
<dbReference type="InterPro" id="IPR037528">
    <property type="entry name" value="ArgB"/>
</dbReference>
<dbReference type="InterPro" id="IPR001048">
    <property type="entry name" value="Asp/Glu/Uridylate_kinase"/>
</dbReference>
<dbReference type="InterPro" id="IPR001057">
    <property type="entry name" value="Glu/AcGlu_kinase"/>
</dbReference>
<dbReference type="InterPro" id="IPR041727">
    <property type="entry name" value="NAGK-C"/>
</dbReference>
<dbReference type="NCBIfam" id="TIGR00761">
    <property type="entry name" value="argB"/>
    <property type="match status" value="1"/>
</dbReference>
<dbReference type="PANTHER" id="PTHR23342">
    <property type="entry name" value="N-ACETYLGLUTAMATE SYNTHASE"/>
    <property type="match status" value="1"/>
</dbReference>
<dbReference type="PANTHER" id="PTHR23342:SF0">
    <property type="entry name" value="N-ACETYLGLUTAMATE SYNTHASE, MITOCHONDRIAL"/>
    <property type="match status" value="1"/>
</dbReference>
<dbReference type="Pfam" id="PF00696">
    <property type="entry name" value="AA_kinase"/>
    <property type="match status" value="1"/>
</dbReference>
<dbReference type="PIRSF" id="PIRSF000728">
    <property type="entry name" value="NAGK"/>
    <property type="match status" value="1"/>
</dbReference>
<dbReference type="PRINTS" id="PR00474">
    <property type="entry name" value="GLU5KINASE"/>
</dbReference>
<dbReference type="SUPFAM" id="SSF53633">
    <property type="entry name" value="Carbamate kinase-like"/>
    <property type="match status" value="1"/>
</dbReference>
<keyword id="KW-0028">Amino-acid biosynthesis</keyword>
<keyword id="KW-0055">Arginine biosynthesis</keyword>
<keyword id="KW-0067">ATP-binding</keyword>
<keyword id="KW-0963">Cytoplasm</keyword>
<keyword id="KW-0418">Kinase</keyword>
<keyword id="KW-0547">Nucleotide-binding</keyword>
<keyword id="KW-1185">Reference proteome</keyword>
<keyword id="KW-0808">Transferase</keyword>
<evidence type="ECO:0000255" key="1">
    <source>
        <dbReference type="HAMAP-Rule" id="MF_00082"/>
    </source>
</evidence>
<protein>
    <recommendedName>
        <fullName evidence="1">Acetylglutamate kinase</fullName>
        <ecNumber evidence="1">2.7.2.8</ecNumber>
    </recommendedName>
    <alternativeName>
        <fullName evidence="1">N-acetyl-L-glutamate 5-phosphotransferase</fullName>
    </alternativeName>
    <alternativeName>
        <fullName evidence="1">NAG kinase</fullName>
        <shortName evidence="1">NAGK</shortName>
    </alternativeName>
</protein>
<proteinExistence type="inferred from homology"/>
<accession>C5BW20</accession>
<reference key="1">
    <citation type="journal article" date="2009" name="Stand. Genomic Sci.">
        <title>Complete genome sequence of Beutenbergia cavernae type strain (HKI 0122).</title>
        <authorList>
            <person name="Land M."/>
            <person name="Pukall R."/>
            <person name="Abt B."/>
            <person name="Goker M."/>
            <person name="Rohde M."/>
            <person name="Glavina Del Rio T."/>
            <person name="Tice H."/>
            <person name="Copeland A."/>
            <person name="Cheng J.F."/>
            <person name="Lucas S."/>
            <person name="Chen F."/>
            <person name="Nolan M."/>
            <person name="Bruce D."/>
            <person name="Goodwin L."/>
            <person name="Pitluck S."/>
            <person name="Ivanova N."/>
            <person name="Mavromatis K."/>
            <person name="Ovchinnikova G."/>
            <person name="Pati A."/>
            <person name="Chen A."/>
            <person name="Palaniappan K."/>
            <person name="Hauser L."/>
            <person name="Chang Y.J."/>
            <person name="Jefferies C.C."/>
            <person name="Saunders E."/>
            <person name="Brettin T."/>
            <person name="Detter J.C."/>
            <person name="Han C."/>
            <person name="Chain P."/>
            <person name="Bristow J."/>
            <person name="Eisen J.A."/>
            <person name="Markowitz V."/>
            <person name="Hugenholtz P."/>
            <person name="Kyrpides N.C."/>
            <person name="Klenk H.P."/>
            <person name="Lapidus A."/>
        </authorList>
    </citation>
    <scope>NUCLEOTIDE SEQUENCE [LARGE SCALE GENOMIC DNA]</scope>
    <source>
        <strain>ATCC BAA-8 / DSM 12333 / CCUG 43141 / JCM 11478 / NBRC 16432 / NCIMB 13614 / HKI 0122</strain>
    </source>
</reference>
<feature type="chain" id="PRO_1000202558" description="Acetylglutamate kinase">
    <location>
        <begin position="1"/>
        <end position="312"/>
    </location>
</feature>
<feature type="binding site" evidence="1">
    <location>
        <begin position="76"/>
        <end position="77"/>
    </location>
    <ligand>
        <name>substrate</name>
    </ligand>
</feature>
<feature type="binding site" evidence="1">
    <location>
        <position position="98"/>
    </location>
    <ligand>
        <name>substrate</name>
    </ligand>
</feature>
<feature type="binding site" evidence="1">
    <location>
        <position position="199"/>
    </location>
    <ligand>
        <name>substrate</name>
    </ligand>
</feature>
<feature type="site" description="Transition state stabilizer" evidence="1">
    <location>
        <position position="41"/>
    </location>
</feature>
<feature type="site" description="Transition state stabilizer" evidence="1">
    <location>
        <position position="260"/>
    </location>
</feature>
<organism>
    <name type="scientific">Beutenbergia cavernae (strain ATCC BAA-8 / DSM 12333 / CCUG 43141 / JCM 11478 / NBRC 16432 / NCIMB 13614 / HKI 0122)</name>
    <dbReference type="NCBI Taxonomy" id="471853"/>
    <lineage>
        <taxon>Bacteria</taxon>
        <taxon>Bacillati</taxon>
        <taxon>Actinomycetota</taxon>
        <taxon>Actinomycetes</taxon>
        <taxon>Micrococcales</taxon>
        <taxon>Beutenbergiaceae</taxon>
        <taxon>Beutenbergia</taxon>
    </lineage>
</organism>
<comment type="function">
    <text evidence="1">Catalyzes the ATP-dependent phosphorylation of N-acetyl-L-glutamate.</text>
</comment>
<comment type="catalytic activity">
    <reaction evidence="1">
        <text>N-acetyl-L-glutamate + ATP = N-acetyl-L-glutamyl 5-phosphate + ADP</text>
        <dbReference type="Rhea" id="RHEA:14629"/>
        <dbReference type="ChEBI" id="CHEBI:30616"/>
        <dbReference type="ChEBI" id="CHEBI:44337"/>
        <dbReference type="ChEBI" id="CHEBI:57936"/>
        <dbReference type="ChEBI" id="CHEBI:456216"/>
        <dbReference type="EC" id="2.7.2.8"/>
    </reaction>
</comment>
<comment type="pathway">
    <text evidence="1">Amino-acid biosynthesis; L-arginine biosynthesis; N(2)-acetyl-L-ornithine from L-glutamate: step 2/4.</text>
</comment>
<comment type="subcellular location">
    <subcellularLocation>
        <location evidence="1">Cytoplasm</location>
    </subcellularLocation>
</comment>
<comment type="similarity">
    <text evidence="1">Belongs to the acetylglutamate kinase family. ArgB subfamily.</text>
</comment>
<name>ARGB_BEUC1</name>